<sequence>MSWLWGSTTNPQFEELAEKACSPLNLPYPQSEDIATALEVADMIRSKAIQPKMAMQSLKKRIASKNGRVQMYAIGLTDTCIKNGGDHFLLEVASKEFVDELSNLIKATTTSPEVKQMLIKYFQQWALAFKSKSELSFFVEVYNELRASGITFPPPPAPVPSHLLTTTTAPAWVDSDACMRCRSAFTFTNRKHHCRNCGLVFDQACSSHSMPLPKYGITEEVRVCDGCWAKAGRNKADAPAPAVPGRTPRSRADLDADLQRAIELSLAESQHSQNRHHSHFTPSEPPLAHGTVEDEDEQMRLAIEASLRDMEARPSAPAGLGEAPEPEYRPLPTFDLSPRENETILTFSNTMDQMAAYGERDLRRFPHAHVLAEQANTVGGRLRRNVEEKSTKQQMLMEMQDKLSQAVNLYGQILDGQQAYAAKRAHEEQARRYQQQQSYYTQQYQPQPQLYGQYPPNGYQAFVPPQQAYQPPQPQPEAQAQHAPSLYPTMPYTTPNFTSPPQERVYPQQSHSSPYSQWSPAPSHVQPGLARQASVVVPPVSSPVPAGVQRQASMTYGAPIPVAEQSQRQQQQYASAPPFASGAAPVDIPSAPPPVNLSTHPNSPQRHSYIPSHPQTQTQTQYESQPQEIPSQQDMQYGASAPPPDSLGSYVSEGTVGSAKSGLEQEHAASQIQPQPQPQASAQTQTQSQSQLQAQPQQNQYAAQTQLPAGMYNAASFPQPLPPTIFPDAPVEAPKGLEKEEKEEALLIEL</sequence>
<organism>
    <name type="scientific">Cryptococcus neoformans var. neoformans serotype D (strain JEC21 / ATCC MYA-565)</name>
    <name type="common">Filobasidiella neoformans</name>
    <dbReference type="NCBI Taxonomy" id="214684"/>
    <lineage>
        <taxon>Eukaryota</taxon>
        <taxon>Fungi</taxon>
        <taxon>Dikarya</taxon>
        <taxon>Basidiomycota</taxon>
        <taxon>Agaricomycotina</taxon>
        <taxon>Tremellomycetes</taxon>
        <taxon>Tremellales</taxon>
        <taxon>Cryptococcaceae</taxon>
        <taxon>Cryptococcus</taxon>
        <taxon>Cryptococcus neoformans species complex</taxon>
    </lineage>
</organism>
<evidence type="ECO:0000250" key="1"/>
<evidence type="ECO:0000255" key="2">
    <source>
        <dbReference type="PROSITE-ProRule" id="PRU00091"/>
    </source>
</evidence>
<evidence type="ECO:0000255" key="3">
    <source>
        <dbReference type="PROSITE-ProRule" id="PRU00213"/>
    </source>
</evidence>
<evidence type="ECO:0000255" key="4">
    <source>
        <dbReference type="PROSITE-ProRule" id="PRU00218"/>
    </source>
</evidence>
<evidence type="ECO:0000256" key="5">
    <source>
        <dbReference type="SAM" id="MobiDB-lite"/>
    </source>
</evidence>
<evidence type="ECO:0000305" key="6"/>
<keyword id="KW-0967">Endosome</keyword>
<keyword id="KW-0472">Membrane</keyword>
<keyword id="KW-0479">Metal-binding</keyword>
<keyword id="KW-1185">Reference proteome</keyword>
<keyword id="KW-0677">Repeat</keyword>
<keyword id="KW-0862">Zinc</keyword>
<keyword id="KW-0863">Zinc-finger</keyword>
<reference key="1">
    <citation type="journal article" date="2005" name="Science">
        <title>The genome of the basidiomycetous yeast and human pathogen Cryptococcus neoformans.</title>
        <authorList>
            <person name="Loftus B.J."/>
            <person name="Fung E."/>
            <person name="Roncaglia P."/>
            <person name="Rowley D."/>
            <person name="Amedeo P."/>
            <person name="Bruno D."/>
            <person name="Vamathevan J."/>
            <person name="Miranda M."/>
            <person name="Anderson I.J."/>
            <person name="Fraser J.A."/>
            <person name="Allen J.E."/>
            <person name="Bosdet I.E."/>
            <person name="Brent M.R."/>
            <person name="Chiu R."/>
            <person name="Doering T.L."/>
            <person name="Donlin M.J."/>
            <person name="D'Souza C.A."/>
            <person name="Fox D.S."/>
            <person name="Grinberg V."/>
            <person name="Fu J."/>
            <person name="Fukushima M."/>
            <person name="Haas B.J."/>
            <person name="Huang J.C."/>
            <person name="Janbon G."/>
            <person name="Jones S.J.M."/>
            <person name="Koo H.L."/>
            <person name="Krzywinski M.I."/>
            <person name="Kwon-Chung K.J."/>
            <person name="Lengeler K.B."/>
            <person name="Maiti R."/>
            <person name="Marra M.A."/>
            <person name="Marra R.E."/>
            <person name="Mathewson C.A."/>
            <person name="Mitchell T.G."/>
            <person name="Pertea M."/>
            <person name="Riggs F.R."/>
            <person name="Salzberg S.L."/>
            <person name="Schein J.E."/>
            <person name="Shvartsbeyn A."/>
            <person name="Shin H."/>
            <person name="Shumway M."/>
            <person name="Specht C.A."/>
            <person name="Suh B.B."/>
            <person name="Tenney A."/>
            <person name="Utterback T.R."/>
            <person name="Wickes B.L."/>
            <person name="Wortman J.R."/>
            <person name="Wye N.H."/>
            <person name="Kronstad J.W."/>
            <person name="Lodge J.K."/>
            <person name="Heitman J."/>
            <person name="Davis R.W."/>
            <person name="Fraser C.M."/>
            <person name="Hyman R.W."/>
        </authorList>
    </citation>
    <scope>NUCLEOTIDE SEQUENCE [LARGE SCALE GENOMIC DNA]</scope>
    <source>
        <strain>JEC21 / ATCC MYA-565</strain>
    </source>
</reference>
<name>VPS27_CRYNJ</name>
<proteinExistence type="inferred from homology"/>
<comment type="function">
    <text evidence="1">Component of the ESCRT-0 complex which is the sorting receptor for ubiquitinated cargo proteins at the multivesicular body (MVB) and recruits ESCRT-I to the MVB outer membrane.</text>
</comment>
<comment type="subunit">
    <text>Component of the ESCRT-0 complex composed of HSE1 and VPS27.</text>
</comment>
<comment type="subcellular location">
    <subcellularLocation>
        <location evidence="1">Endosome membrane</location>
        <topology evidence="1">Peripheral membrane protein</topology>
        <orientation evidence="1">Cytoplasmic side</orientation>
    </subcellularLocation>
</comment>
<comment type="domain">
    <text>The FYVE domain is involved in the binding to phosphatidylinositol 3-phosphate (PtdIns(3)P) which is required for the association to endosomal membranes.</text>
</comment>
<comment type="domain">
    <text evidence="1">Both IUM domains are necessary for efficient binding to ubiquitin.</text>
</comment>
<comment type="similarity">
    <text evidence="6">Belongs to the VPS27 family.</text>
</comment>
<feature type="chain" id="PRO_0000292514" description="Vacuolar protein sorting-associated protein 27">
    <location>
        <begin position="1"/>
        <end position="750"/>
    </location>
</feature>
<feature type="domain" description="VHS" evidence="4">
    <location>
        <begin position="24"/>
        <end position="153"/>
    </location>
</feature>
<feature type="domain" description="UIM 1" evidence="3">
    <location>
        <begin position="253"/>
        <end position="272"/>
    </location>
</feature>
<feature type="domain" description="UIM 2" evidence="3">
    <location>
        <begin position="294"/>
        <end position="313"/>
    </location>
</feature>
<feature type="zinc finger region" description="FYVE-type; degenerate" evidence="2">
    <location>
        <begin position="172"/>
        <end position="232"/>
    </location>
</feature>
<feature type="region of interest" description="Disordered" evidence="5">
    <location>
        <begin position="268"/>
        <end position="292"/>
    </location>
</feature>
<feature type="region of interest" description="Disordered" evidence="5">
    <location>
        <begin position="314"/>
        <end position="336"/>
    </location>
</feature>
<feature type="region of interest" description="Disordered" evidence="5">
    <location>
        <begin position="447"/>
        <end position="530"/>
    </location>
</feature>
<feature type="region of interest" description="Disordered" evidence="5">
    <location>
        <begin position="564"/>
        <end position="739"/>
    </location>
</feature>
<feature type="compositionally biased region" description="Low complexity" evidence="5">
    <location>
        <begin position="447"/>
        <end position="484"/>
    </location>
</feature>
<feature type="compositionally biased region" description="Polar residues" evidence="5">
    <location>
        <begin position="491"/>
        <end position="501"/>
    </location>
</feature>
<feature type="compositionally biased region" description="Low complexity" evidence="5">
    <location>
        <begin position="507"/>
        <end position="520"/>
    </location>
</feature>
<feature type="compositionally biased region" description="Low complexity" evidence="5">
    <location>
        <begin position="565"/>
        <end position="585"/>
    </location>
</feature>
<feature type="compositionally biased region" description="Polar residues" evidence="5">
    <location>
        <begin position="596"/>
        <end position="606"/>
    </location>
</feature>
<feature type="compositionally biased region" description="Polar residues" evidence="5">
    <location>
        <begin position="613"/>
        <end position="635"/>
    </location>
</feature>
<feature type="compositionally biased region" description="Low complexity" evidence="5">
    <location>
        <begin position="668"/>
        <end position="706"/>
    </location>
</feature>
<feature type="binding site" evidence="2">
    <location>
        <position position="194"/>
    </location>
    <ligand>
        <name>Zn(2+)</name>
        <dbReference type="ChEBI" id="CHEBI:29105"/>
    </ligand>
</feature>
<feature type="binding site" evidence="2">
    <location>
        <position position="197"/>
    </location>
    <ligand>
        <name>Zn(2+)</name>
        <dbReference type="ChEBI" id="CHEBI:29105"/>
    </ligand>
</feature>
<feature type="binding site" evidence="2">
    <location>
        <position position="224"/>
    </location>
    <ligand>
        <name>Zn(2+)</name>
        <dbReference type="ChEBI" id="CHEBI:29105"/>
    </ligand>
</feature>
<feature type="binding site" evidence="2">
    <location>
        <position position="227"/>
    </location>
    <ligand>
        <name>Zn(2+)</name>
        <dbReference type="ChEBI" id="CHEBI:29105"/>
    </ligand>
</feature>
<accession>P0CS26</accession>
<accession>Q55S12</accession>
<accession>Q5KGG4</accession>
<gene>
    <name type="primary">VPS27</name>
    <name type="ordered locus">CNE03710</name>
</gene>
<protein>
    <recommendedName>
        <fullName>Vacuolar protein sorting-associated protein 27</fullName>
    </recommendedName>
</protein>
<dbReference type="EMBL" id="AE017345">
    <property type="protein sequence ID" value="AAW43634.1"/>
    <property type="molecule type" value="Genomic_DNA"/>
</dbReference>
<dbReference type="RefSeq" id="XP_570941.1">
    <property type="nucleotide sequence ID" value="XM_570941.1"/>
</dbReference>
<dbReference type="SMR" id="P0CS26"/>
<dbReference type="FunCoup" id="P0CS26">
    <property type="interactions" value="96"/>
</dbReference>
<dbReference type="STRING" id="214684.P0CS26"/>
<dbReference type="PaxDb" id="214684-P0CS26"/>
<dbReference type="EnsemblFungi" id="AAW43634">
    <property type="protein sequence ID" value="AAW43634"/>
    <property type="gene ID" value="CNE03710"/>
</dbReference>
<dbReference type="GeneID" id="3257686"/>
<dbReference type="KEGG" id="cne:CNE03710"/>
<dbReference type="VEuPathDB" id="FungiDB:CNE03710"/>
<dbReference type="eggNOG" id="KOG1818">
    <property type="taxonomic scope" value="Eukaryota"/>
</dbReference>
<dbReference type="HOGENOM" id="CLU_011862_1_0_1"/>
<dbReference type="InParanoid" id="P0CS26"/>
<dbReference type="OMA" id="DQQCSAK"/>
<dbReference type="OrthoDB" id="957735at2759"/>
<dbReference type="Proteomes" id="UP000002149">
    <property type="component" value="Chromosome 5"/>
</dbReference>
<dbReference type="GO" id="GO:0005769">
    <property type="term" value="C:early endosome"/>
    <property type="evidence" value="ECO:0000318"/>
    <property type="project" value="GO_Central"/>
</dbReference>
<dbReference type="GO" id="GO:0010008">
    <property type="term" value="C:endosome membrane"/>
    <property type="evidence" value="ECO:0007669"/>
    <property type="project" value="UniProtKB-SubCell"/>
</dbReference>
<dbReference type="GO" id="GO:0035091">
    <property type="term" value="F:phosphatidylinositol binding"/>
    <property type="evidence" value="ECO:0007669"/>
    <property type="project" value="InterPro"/>
</dbReference>
<dbReference type="GO" id="GO:0043130">
    <property type="term" value="F:ubiquitin binding"/>
    <property type="evidence" value="ECO:0000318"/>
    <property type="project" value="GO_Central"/>
</dbReference>
<dbReference type="GO" id="GO:0008270">
    <property type="term" value="F:zinc ion binding"/>
    <property type="evidence" value="ECO:0007669"/>
    <property type="project" value="UniProtKB-KW"/>
</dbReference>
<dbReference type="GO" id="GO:0032456">
    <property type="term" value="P:endocytic recycling"/>
    <property type="evidence" value="ECO:0000318"/>
    <property type="project" value="GO_Central"/>
</dbReference>
<dbReference type="GO" id="GO:0006886">
    <property type="term" value="P:intracellular protein transport"/>
    <property type="evidence" value="ECO:0007669"/>
    <property type="project" value="UniProtKB-ARBA"/>
</dbReference>
<dbReference type="GO" id="GO:0031623">
    <property type="term" value="P:receptor internalization"/>
    <property type="evidence" value="ECO:0000318"/>
    <property type="project" value="GO_Central"/>
</dbReference>
<dbReference type="GO" id="GO:0007034">
    <property type="term" value="P:vacuolar transport"/>
    <property type="evidence" value="ECO:0007669"/>
    <property type="project" value="UniProtKB-ARBA"/>
</dbReference>
<dbReference type="CDD" id="cd21385">
    <property type="entry name" value="GAT_Vps27"/>
    <property type="match status" value="1"/>
</dbReference>
<dbReference type="CDD" id="cd16979">
    <property type="entry name" value="VHS_Vps27"/>
    <property type="match status" value="1"/>
</dbReference>
<dbReference type="Gene3D" id="1.20.5.1940">
    <property type="match status" value="1"/>
</dbReference>
<dbReference type="Gene3D" id="1.25.40.90">
    <property type="match status" value="1"/>
</dbReference>
<dbReference type="Gene3D" id="6.10.140.100">
    <property type="match status" value="1"/>
</dbReference>
<dbReference type="Gene3D" id="3.30.40.10">
    <property type="entry name" value="Zinc/RING finger domain, C3HC4 (zinc finger)"/>
    <property type="match status" value="1"/>
</dbReference>
<dbReference type="InterPro" id="IPR008942">
    <property type="entry name" value="ENTH_VHS"/>
</dbReference>
<dbReference type="InterPro" id="IPR017073">
    <property type="entry name" value="HGS/VPS27"/>
</dbReference>
<dbReference type="InterPro" id="IPR003903">
    <property type="entry name" value="UIM_dom"/>
</dbReference>
<dbReference type="InterPro" id="IPR002014">
    <property type="entry name" value="VHS_dom"/>
</dbReference>
<dbReference type="InterPro" id="IPR000306">
    <property type="entry name" value="Znf_FYVE"/>
</dbReference>
<dbReference type="InterPro" id="IPR017455">
    <property type="entry name" value="Znf_FYVE-rel"/>
</dbReference>
<dbReference type="InterPro" id="IPR011011">
    <property type="entry name" value="Znf_FYVE_PHD"/>
</dbReference>
<dbReference type="InterPro" id="IPR013083">
    <property type="entry name" value="Znf_RING/FYVE/PHD"/>
</dbReference>
<dbReference type="PANTHER" id="PTHR46275">
    <property type="entry name" value="HEPATOCYTE GROWTH FACTOR-REGULATED TYROSINE KINASE SUBSTRATE"/>
    <property type="match status" value="1"/>
</dbReference>
<dbReference type="PANTHER" id="PTHR46275:SF1">
    <property type="entry name" value="HEPATOCYTE GROWTH FACTOR-REGULATED TYROSINE KINASE SUBSTRATE"/>
    <property type="match status" value="1"/>
</dbReference>
<dbReference type="Pfam" id="PF01363">
    <property type="entry name" value="FYVE"/>
    <property type="match status" value="1"/>
</dbReference>
<dbReference type="Pfam" id="PF02809">
    <property type="entry name" value="UIM"/>
    <property type="match status" value="2"/>
</dbReference>
<dbReference type="Pfam" id="PF00790">
    <property type="entry name" value="VHS"/>
    <property type="match status" value="1"/>
</dbReference>
<dbReference type="SMART" id="SM00064">
    <property type="entry name" value="FYVE"/>
    <property type="match status" value="1"/>
</dbReference>
<dbReference type="SMART" id="SM00726">
    <property type="entry name" value="UIM"/>
    <property type="match status" value="2"/>
</dbReference>
<dbReference type="SMART" id="SM00288">
    <property type="entry name" value="VHS"/>
    <property type="match status" value="1"/>
</dbReference>
<dbReference type="SUPFAM" id="SSF48464">
    <property type="entry name" value="ENTH/VHS domain"/>
    <property type="match status" value="1"/>
</dbReference>
<dbReference type="SUPFAM" id="SSF57903">
    <property type="entry name" value="FYVE/PHD zinc finger"/>
    <property type="match status" value="1"/>
</dbReference>
<dbReference type="PROSITE" id="PS50330">
    <property type="entry name" value="UIM"/>
    <property type="match status" value="2"/>
</dbReference>
<dbReference type="PROSITE" id="PS50179">
    <property type="entry name" value="VHS"/>
    <property type="match status" value="1"/>
</dbReference>
<dbReference type="PROSITE" id="PS50178">
    <property type="entry name" value="ZF_FYVE"/>
    <property type="match status" value="1"/>
</dbReference>